<sequence>MSAPIFDPTPEDIQNLLAAQTHIGSKNVQVQNIPYVFKQRADGVNIINVGKTWEKIQLAARIIAAVPNPADVVAISARTYGQRAVLKFANHCGATAIAGRFTPGSFTNYITRSFKEPRLLIVTDPRTDHQAIKEASYVNIPVIALVDTDSPVEFVDVAIPCNNKGRHSVGLVWWMISREVLRLRGALEDRNTEWSVMPDLYFYRDPEEPENTEEAAEEAATEEVVETAAAEAAAATNADNWDVAPDAGAGAADWAATDDWSESAPAPVAA</sequence>
<protein>
    <recommendedName>
        <fullName evidence="1">Small ribosomal subunit protein uS2</fullName>
    </recommendedName>
    <alternativeName>
        <fullName evidence="3">40S ribosomal protein S0</fullName>
    </alternativeName>
</protein>
<accession>Q6CGM0</accession>
<name>RSSA_YARLI</name>
<evidence type="ECO:0000255" key="1">
    <source>
        <dbReference type="HAMAP-Rule" id="MF_03015"/>
    </source>
</evidence>
<evidence type="ECO:0000256" key="2">
    <source>
        <dbReference type="SAM" id="MobiDB-lite"/>
    </source>
</evidence>
<evidence type="ECO:0000305" key="3"/>
<organism>
    <name type="scientific">Yarrowia lipolytica (strain CLIB 122 / E 150)</name>
    <name type="common">Yeast</name>
    <name type="synonym">Candida lipolytica</name>
    <dbReference type="NCBI Taxonomy" id="284591"/>
    <lineage>
        <taxon>Eukaryota</taxon>
        <taxon>Fungi</taxon>
        <taxon>Dikarya</taxon>
        <taxon>Ascomycota</taxon>
        <taxon>Saccharomycotina</taxon>
        <taxon>Dipodascomycetes</taxon>
        <taxon>Dipodascales</taxon>
        <taxon>Dipodascales incertae sedis</taxon>
        <taxon>Yarrowia</taxon>
    </lineage>
</organism>
<keyword id="KW-0963">Cytoplasm</keyword>
<keyword id="KW-1185">Reference proteome</keyword>
<keyword id="KW-0687">Ribonucleoprotein</keyword>
<keyword id="KW-0689">Ribosomal protein</keyword>
<gene>
    <name evidence="1" type="primary">RPS0</name>
    <name type="ordered locus">YALI0A18205g</name>
</gene>
<feature type="chain" id="PRO_0000371653" description="Small ribosomal subunit protein uS2">
    <location>
        <begin position="1"/>
        <end position="270"/>
    </location>
</feature>
<feature type="region of interest" description="Disordered" evidence="2">
    <location>
        <begin position="207"/>
        <end position="270"/>
    </location>
</feature>
<feature type="compositionally biased region" description="Acidic residues" evidence="2">
    <location>
        <begin position="207"/>
        <end position="225"/>
    </location>
</feature>
<feature type="compositionally biased region" description="Low complexity" evidence="2">
    <location>
        <begin position="226"/>
        <end position="258"/>
    </location>
</feature>
<proteinExistence type="inferred from homology"/>
<reference key="1">
    <citation type="journal article" date="2004" name="Nature">
        <title>Genome evolution in yeasts.</title>
        <authorList>
            <person name="Dujon B."/>
            <person name="Sherman D."/>
            <person name="Fischer G."/>
            <person name="Durrens P."/>
            <person name="Casaregola S."/>
            <person name="Lafontaine I."/>
            <person name="de Montigny J."/>
            <person name="Marck C."/>
            <person name="Neuveglise C."/>
            <person name="Talla E."/>
            <person name="Goffard N."/>
            <person name="Frangeul L."/>
            <person name="Aigle M."/>
            <person name="Anthouard V."/>
            <person name="Babour A."/>
            <person name="Barbe V."/>
            <person name="Barnay S."/>
            <person name="Blanchin S."/>
            <person name="Beckerich J.-M."/>
            <person name="Beyne E."/>
            <person name="Bleykasten C."/>
            <person name="Boisrame A."/>
            <person name="Boyer J."/>
            <person name="Cattolico L."/>
            <person name="Confanioleri F."/>
            <person name="de Daruvar A."/>
            <person name="Despons L."/>
            <person name="Fabre E."/>
            <person name="Fairhead C."/>
            <person name="Ferry-Dumazet H."/>
            <person name="Groppi A."/>
            <person name="Hantraye F."/>
            <person name="Hennequin C."/>
            <person name="Jauniaux N."/>
            <person name="Joyet P."/>
            <person name="Kachouri R."/>
            <person name="Kerrest A."/>
            <person name="Koszul R."/>
            <person name="Lemaire M."/>
            <person name="Lesur I."/>
            <person name="Ma L."/>
            <person name="Muller H."/>
            <person name="Nicaud J.-M."/>
            <person name="Nikolski M."/>
            <person name="Oztas S."/>
            <person name="Ozier-Kalogeropoulos O."/>
            <person name="Pellenz S."/>
            <person name="Potier S."/>
            <person name="Richard G.-F."/>
            <person name="Straub M.-L."/>
            <person name="Suleau A."/>
            <person name="Swennen D."/>
            <person name="Tekaia F."/>
            <person name="Wesolowski-Louvel M."/>
            <person name="Westhof E."/>
            <person name="Wirth B."/>
            <person name="Zeniou-Meyer M."/>
            <person name="Zivanovic Y."/>
            <person name="Bolotin-Fukuhara M."/>
            <person name="Thierry A."/>
            <person name="Bouchier C."/>
            <person name="Caudron B."/>
            <person name="Scarpelli C."/>
            <person name="Gaillardin C."/>
            <person name="Weissenbach J."/>
            <person name="Wincker P."/>
            <person name="Souciet J.-L."/>
        </authorList>
    </citation>
    <scope>NUCLEOTIDE SEQUENCE [LARGE SCALE GENOMIC DNA]</scope>
    <source>
        <strain>CLIB 122 / E 150</strain>
    </source>
</reference>
<dbReference type="EMBL" id="CR382127">
    <property type="protein sequence ID" value="CAG84124.2"/>
    <property type="molecule type" value="Genomic_DNA"/>
</dbReference>
<dbReference type="RefSeq" id="XP_500192.2">
    <property type="nucleotide sequence ID" value="XM_500192.2"/>
</dbReference>
<dbReference type="SMR" id="Q6CGM0"/>
<dbReference type="FunCoup" id="Q6CGM0">
    <property type="interactions" value="1357"/>
</dbReference>
<dbReference type="STRING" id="284591.Q6CGM0"/>
<dbReference type="EnsemblFungi" id="CAG84124">
    <property type="protein sequence ID" value="CAG84124"/>
    <property type="gene ID" value="YALI0_A18205g"/>
</dbReference>
<dbReference type="KEGG" id="yli:2906125"/>
<dbReference type="VEuPathDB" id="FungiDB:YALI0_A18205g"/>
<dbReference type="HOGENOM" id="CLU_058171_2_0_1"/>
<dbReference type="InParanoid" id="Q6CGM0"/>
<dbReference type="OMA" id="QCHLGAK"/>
<dbReference type="OrthoDB" id="117147at4891"/>
<dbReference type="Proteomes" id="UP000001300">
    <property type="component" value="Chromosome A"/>
</dbReference>
<dbReference type="GO" id="GO:0022627">
    <property type="term" value="C:cytosolic small ribosomal subunit"/>
    <property type="evidence" value="ECO:0000318"/>
    <property type="project" value="GO_Central"/>
</dbReference>
<dbReference type="GO" id="GO:0003735">
    <property type="term" value="F:structural constituent of ribosome"/>
    <property type="evidence" value="ECO:0000318"/>
    <property type="project" value="GO_Central"/>
</dbReference>
<dbReference type="GO" id="GO:0002181">
    <property type="term" value="P:cytoplasmic translation"/>
    <property type="evidence" value="ECO:0000318"/>
    <property type="project" value="GO_Central"/>
</dbReference>
<dbReference type="GO" id="GO:0000028">
    <property type="term" value="P:ribosomal small subunit assembly"/>
    <property type="evidence" value="ECO:0000318"/>
    <property type="project" value="GO_Central"/>
</dbReference>
<dbReference type="CDD" id="cd01425">
    <property type="entry name" value="RPS2"/>
    <property type="match status" value="1"/>
</dbReference>
<dbReference type="FunFam" id="3.40.50.10490:FF:000010">
    <property type="entry name" value="40S ribosomal protein S0"/>
    <property type="match status" value="1"/>
</dbReference>
<dbReference type="Gene3D" id="3.40.50.10490">
    <property type="entry name" value="Glucose-6-phosphate isomerase like protein, domain 1"/>
    <property type="match status" value="1"/>
</dbReference>
<dbReference type="HAMAP" id="MF_03015">
    <property type="entry name" value="Ribosomal_S2_euk"/>
    <property type="match status" value="1"/>
</dbReference>
<dbReference type="InterPro" id="IPR001865">
    <property type="entry name" value="Ribosomal_uS2"/>
</dbReference>
<dbReference type="InterPro" id="IPR018130">
    <property type="entry name" value="Ribosomal_uS2_CS"/>
</dbReference>
<dbReference type="InterPro" id="IPR027498">
    <property type="entry name" value="Ribosomal_uS2_euk"/>
</dbReference>
<dbReference type="InterPro" id="IPR005707">
    <property type="entry name" value="Ribosomal_uS2_euk/arc"/>
</dbReference>
<dbReference type="InterPro" id="IPR023591">
    <property type="entry name" value="Ribosomal_uS2_flav_dom_sf"/>
</dbReference>
<dbReference type="NCBIfam" id="TIGR01012">
    <property type="entry name" value="uS2_euk_arch"/>
    <property type="match status" value="1"/>
</dbReference>
<dbReference type="PANTHER" id="PTHR11489">
    <property type="entry name" value="40S RIBOSOMAL PROTEIN SA"/>
    <property type="match status" value="1"/>
</dbReference>
<dbReference type="Pfam" id="PF00318">
    <property type="entry name" value="Ribosomal_S2"/>
    <property type="match status" value="2"/>
</dbReference>
<dbReference type="PRINTS" id="PR00395">
    <property type="entry name" value="RIBOSOMALS2"/>
</dbReference>
<dbReference type="SUPFAM" id="SSF52313">
    <property type="entry name" value="Ribosomal protein S2"/>
    <property type="match status" value="1"/>
</dbReference>
<dbReference type="PROSITE" id="PS00962">
    <property type="entry name" value="RIBOSOMAL_S2_1"/>
    <property type="match status" value="1"/>
</dbReference>
<dbReference type="PROSITE" id="PS00963">
    <property type="entry name" value="RIBOSOMAL_S2_2"/>
    <property type="match status" value="1"/>
</dbReference>
<comment type="function">
    <text evidence="1">Required for the assembly and/or stability of the 40S ribosomal subunit. Required for the processing of the 20S rRNA-precursor to mature 18S rRNA in a late step of the maturation of 40S ribosomal subunits.</text>
</comment>
<comment type="subunit">
    <text evidence="1">Component of the small ribosomal subunit. Mature ribosomes consist of a small (40S) and a large (60S) subunit. The 40S subunit contains about 33 different proteins and 1 molecule of RNA (18S). The 60S subunit contains about 49 different proteins and 3 molecules of RNA (25S, 5.8S and 5S). Interacts with RPS21.</text>
</comment>
<comment type="subcellular location">
    <subcellularLocation>
        <location evidence="1">Cytoplasm</location>
    </subcellularLocation>
</comment>
<comment type="similarity">
    <text evidence="1">Belongs to the universal ribosomal protein uS2 family.</text>
</comment>